<gene>
    <name type="primary">TCP1</name>
    <name type="synonym">CCT1</name>
</gene>
<name>TCPA_CRIGR</name>
<evidence type="ECO:0000250" key="1">
    <source>
        <dbReference type="UniProtKB" id="P11983"/>
    </source>
</evidence>
<evidence type="ECO:0000250" key="2">
    <source>
        <dbReference type="UniProtKB" id="P17987"/>
    </source>
</evidence>
<evidence type="ECO:0000305" key="3"/>
<dbReference type="EC" id="3.6.1.-" evidence="2"/>
<dbReference type="EMBL" id="M34665">
    <property type="protein sequence ID" value="AAA37020.1"/>
    <property type="molecule type" value="mRNA"/>
</dbReference>
<dbReference type="PIR" id="S13163">
    <property type="entry name" value="S13163"/>
</dbReference>
<dbReference type="RefSeq" id="NP_001233662.1">
    <property type="nucleotide sequence ID" value="NM_001246733.1"/>
</dbReference>
<dbReference type="SMR" id="P18279"/>
<dbReference type="PaxDb" id="10029-NP_001233662.1"/>
<dbReference type="Ensembl" id="ENSCGRT00001008930.1">
    <property type="protein sequence ID" value="ENSCGRP00001005768.1"/>
    <property type="gene ID" value="ENSCGRG00001007629.1"/>
</dbReference>
<dbReference type="GeneID" id="100689476"/>
<dbReference type="KEGG" id="cge:100689476"/>
<dbReference type="CTD" id="6950"/>
<dbReference type="eggNOG" id="KOG0360">
    <property type="taxonomic scope" value="Eukaryota"/>
</dbReference>
<dbReference type="GeneTree" id="ENSGT00550000074878"/>
<dbReference type="OMA" id="RGPNDYQ"/>
<dbReference type="OrthoDB" id="496at2759"/>
<dbReference type="Proteomes" id="UP000694386">
    <property type="component" value="Unplaced"/>
</dbReference>
<dbReference type="Proteomes" id="UP001108280">
    <property type="component" value="Chromosome 2"/>
</dbReference>
<dbReference type="GO" id="GO:0001669">
    <property type="term" value="C:acrosomal vesicle"/>
    <property type="evidence" value="ECO:0007669"/>
    <property type="project" value="Ensembl"/>
</dbReference>
<dbReference type="GO" id="GO:0044297">
    <property type="term" value="C:cell body"/>
    <property type="evidence" value="ECO:0007669"/>
    <property type="project" value="Ensembl"/>
</dbReference>
<dbReference type="GO" id="GO:0005832">
    <property type="term" value="C:chaperonin-containing T-complex"/>
    <property type="evidence" value="ECO:0000250"/>
    <property type="project" value="UniProtKB"/>
</dbReference>
<dbReference type="GO" id="GO:0005794">
    <property type="term" value="C:Golgi apparatus"/>
    <property type="evidence" value="ECO:0007669"/>
    <property type="project" value="Ensembl"/>
</dbReference>
<dbReference type="GO" id="GO:0000792">
    <property type="term" value="C:heterochromatin"/>
    <property type="evidence" value="ECO:0007669"/>
    <property type="project" value="Ensembl"/>
</dbReference>
<dbReference type="GO" id="GO:0005874">
    <property type="term" value="C:microtubule"/>
    <property type="evidence" value="ECO:0007669"/>
    <property type="project" value="Ensembl"/>
</dbReference>
<dbReference type="GO" id="GO:0000242">
    <property type="term" value="C:pericentriolar material"/>
    <property type="evidence" value="ECO:0007669"/>
    <property type="project" value="Ensembl"/>
</dbReference>
<dbReference type="GO" id="GO:0002199">
    <property type="term" value="C:zona pellucida receptor complex"/>
    <property type="evidence" value="ECO:0007669"/>
    <property type="project" value="Ensembl"/>
</dbReference>
<dbReference type="GO" id="GO:0005524">
    <property type="term" value="F:ATP binding"/>
    <property type="evidence" value="ECO:0007669"/>
    <property type="project" value="UniProtKB-KW"/>
</dbReference>
<dbReference type="GO" id="GO:0016887">
    <property type="term" value="F:ATP hydrolysis activity"/>
    <property type="evidence" value="ECO:0007669"/>
    <property type="project" value="InterPro"/>
</dbReference>
<dbReference type="GO" id="GO:0140662">
    <property type="term" value="F:ATP-dependent protein folding chaperone"/>
    <property type="evidence" value="ECO:0007669"/>
    <property type="project" value="InterPro"/>
</dbReference>
<dbReference type="GO" id="GO:0031625">
    <property type="term" value="F:ubiquitin protein ligase binding"/>
    <property type="evidence" value="ECO:0007669"/>
    <property type="project" value="Ensembl"/>
</dbReference>
<dbReference type="GO" id="GO:0051082">
    <property type="term" value="F:unfolded protein binding"/>
    <property type="evidence" value="ECO:0007669"/>
    <property type="project" value="InterPro"/>
</dbReference>
<dbReference type="GO" id="GO:0007339">
    <property type="term" value="P:binding of sperm to zona pellucida"/>
    <property type="evidence" value="ECO:0007669"/>
    <property type="project" value="Ensembl"/>
</dbReference>
<dbReference type="GO" id="GO:0051086">
    <property type="term" value="P:chaperone mediated protein folding independent of cofactor"/>
    <property type="evidence" value="ECO:0007669"/>
    <property type="project" value="Ensembl"/>
</dbReference>
<dbReference type="GO" id="GO:1904851">
    <property type="term" value="P:positive regulation of establishment of protein localization to telomere"/>
    <property type="evidence" value="ECO:0007669"/>
    <property type="project" value="Ensembl"/>
</dbReference>
<dbReference type="GO" id="GO:1904874">
    <property type="term" value="P:positive regulation of telomerase RNA localization to Cajal body"/>
    <property type="evidence" value="ECO:0007669"/>
    <property type="project" value="Ensembl"/>
</dbReference>
<dbReference type="GO" id="GO:0032212">
    <property type="term" value="P:positive regulation of telomere maintenance via telomerase"/>
    <property type="evidence" value="ECO:0007669"/>
    <property type="project" value="Ensembl"/>
</dbReference>
<dbReference type="GO" id="GO:0050821">
    <property type="term" value="P:protein stabilization"/>
    <property type="evidence" value="ECO:0007669"/>
    <property type="project" value="Ensembl"/>
</dbReference>
<dbReference type="GO" id="GO:0090666">
    <property type="term" value="P:scaRNA localization to Cajal body"/>
    <property type="evidence" value="ECO:0007669"/>
    <property type="project" value="Ensembl"/>
</dbReference>
<dbReference type="CDD" id="cd03335">
    <property type="entry name" value="TCP1_alpha"/>
    <property type="match status" value="1"/>
</dbReference>
<dbReference type="FunFam" id="3.50.7.10:FF:000009">
    <property type="entry name" value="T-complex protein 1 subunit alpha"/>
    <property type="match status" value="1"/>
</dbReference>
<dbReference type="FunFam" id="3.30.260.10:FF:000022">
    <property type="entry name" value="T-complex protein 1 subunit eta"/>
    <property type="match status" value="1"/>
</dbReference>
<dbReference type="FunFam" id="1.10.560.10:FF:000070">
    <property type="entry name" value="Uncharacterized protein"/>
    <property type="match status" value="1"/>
</dbReference>
<dbReference type="FunFam" id="3.30.260.10:FF:000040">
    <property type="entry name" value="Uncharacterized protein"/>
    <property type="match status" value="1"/>
</dbReference>
<dbReference type="Gene3D" id="3.50.7.10">
    <property type="entry name" value="GroEL"/>
    <property type="match status" value="1"/>
</dbReference>
<dbReference type="Gene3D" id="1.10.560.10">
    <property type="entry name" value="GroEL-like equatorial domain"/>
    <property type="match status" value="1"/>
</dbReference>
<dbReference type="Gene3D" id="3.30.260.10">
    <property type="entry name" value="TCP-1-like chaperonin intermediate domain"/>
    <property type="match status" value="1"/>
</dbReference>
<dbReference type="InterPro" id="IPR012715">
    <property type="entry name" value="Chap_CCT_alpha"/>
</dbReference>
<dbReference type="InterPro" id="IPR017998">
    <property type="entry name" value="Chaperone_TCP-1"/>
</dbReference>
<dbReference type="InterPro" id="IPR002194">
    <property type="entry name" value="Chaperonin_TCP-1_CS"/>
</dbReference>
<dbReference type="InterPro" id="IPR002423">
    <property type="entry name" value="Cpn60/GroEL/TCP-1"/>
</dbReference>
<dbReference type="InterPro" id="IPR027409">
    <property type="entry name" value="GroEL-like_apical_dom_sf"/>
</dbReference>
<dbReference type="InterPro" id="IPR027413">
    <property type="entry name" value="GROEL-like_equatorial_sf"/>
</dbReference>
<dbReference type="InterPro" id="IPR027410">
    <property type="entry name" value="TCP-1-like_intermed_sf"/>
</dbReference>
<dbReference type="InterPro" id="IPR053374">
    <property type="entry name" value="TCP-1_chaperonin"/>
</dbReference>
<dbReference type="InterPro" id="IPR054827">
    <property type="entry name" value="thermosome_alpha"/>
</dbReference>
<dbReference type="NCBIfam" id="TIGR02340">
    <property type="entry name" value="chap_CCT_alpha"/>
    <property type="match status" value="1"/>
</dbReference>
<dbReference type="NCBIfam" id="NF041082">
    <property type="entry name" value="thermosome_alpha"/>
    <property type="match status" value="1"/>
</dbReference>
<dbReference type="NCBIfam" id="NF041083">
    <property type="entry name" value="thermosome_beta"/>
    <property type="match status" value="1"/>
</dbReference>
<dbReference type="PANTHER" id="PTHR11353">
    <property type="entry name" value="CHAPERONIN"/>
    <property type="match status" value="1"/>
</dbReference>
<dbReference type="Pfam" id="PF00118">
    <property type="entry name" value="Cpn60_TCP1"/>
    <property type="match status" value="1"/>
</dbReference>
<dbReference type="PRINTS" id="PR00304">
    <property type="entry name" value="TCOMPLEXTCP1"/>
</dbReference>
<dbReference type="SUPFAM" id="SSF52029">
    <property type="entry name" value="GroEL apical domain-like"/>
    <property type="match status" value="1"/>
</dbReference>
<dbReference type="SUPFAM" id="SSF48592">
    <property type="entry name" value="GroEL equatorial domain-like"/>
    <property type="match status" value="1"/>
</dbReference>
<dbReference type="SUPFAM" id="SSF54849">
    <property type="entry name" value="GroEL-intermediate domain like"/>
    <property type="match status" value="1"/>
</dbReference>
<dbReference type="PROSITE" id="PS00750">
    <property type="entry name" value="TCP1_1"/>
    <property type="match status" value="1"/>
</dbReference>
<dbReference type="PROSITE" id="PS00751">
    <property type="entry name" value="TCP1_2"/>
    <property type="match status" value="1"/>
</dbReference>
<dbReference type="PROSITE" id="PS00995">
    <property type="entry name" value="TCP1_3"/>
    <property type="match status" value="1"/>
</dbReference>
<organism>
    <name type="scientific">Cricetulus griseus</name>
    <name type="common">Chinese hamster</name>
    <name type="synonym">Cricetulus barabensis griseus</name>
    <dbReference type="NCBI Taxonomy" id="10029"/>
    <lineage>
        <taxon>Eukaryota</taxon>
        <taxon>Metazoa</taxon>
        <taxon>Chordata</taxon>
        <taxon>Craniata</taxon>
        <taxon>Vertebrata</taxon>
        <taxon>Euteleostomi</taxon>
        <taxon>Mammalia</taxon>
        <taxon>Eutheria</taxon>
        <taxon>Euarchontoglires</taxon>
        <taxon>Glires</taxon>
        <taxon>Rodentia</taxon>
        <taxon>Myomorpha</taxon>
        <taxon>Muroidea</taxon>
        <taxon>Cricetidae</taxon>
        <taxon>Cricetinae</taxon>
        <taxon>Cricetulus</taxon>
    </lineage>
</organism>
<protein>
    <recommendedName>
        <fullName>T-complex protein 1 subunit alpha</fullName>
        <shortName>TCP-1-alpha</shortName>
        <ecNumber evidence="2">3.6.1.-</ecNumber>
    </recommendedName>
    <alternativeName>
        <fullName>65 kDa antigen</fullName>
    </alternativeName>
    <alternativeName>
        <fullName>CCT-alpha</fullName>
    </alternativeName>
</protein>
<sequence length="556" mass="60339">MEGPLSVFGDRSTGEAIRSQNVMAAASIANIVKSSLGPVGLDKMLVDDIGDVTITNDGATILKLLEVEHPAAKVLCELADLQDKEVGDGTTSVVIIAAELLKNADELVKQKIHPTSVISGYRLACKEAVRYISENLIINTDELGRDCLINAAKTSMSSKIIGINGDFFANMVVDAVLAVKYTDLRGQPRYPVNSVNILKAHGRSQVESMLINGYALNCVVGSQGMPKRIVNAKIACLDFSLQKTKMKLGVQVVITDPEKLDQIRQRESDITKERIEKILATGANVILTTGGIDDMCLKYFVEAGAMAVRRVLKRDLKRIAKASGASILSTLANLEGEETFEATMLGQAEEVVQERICDDELILIKNTKARTSASIILRGANDFMCDEMERSLHDALCVVKRVLESKSVVPGGGAVEAALSIYLENYATSMGSREQLAIAEFARSLLVIPNTLAVNAAQDSTDLVAKLRAFHNEAQVNPERKNLKWIGLDLINGKPRDNKQAGVFEPTIVKVKSLKFATEAAITILRIDDLIKLHPETKDDKHGSYENAVHSGALDD</sequence>
<accession>P18279</accession>
<keyword id="KW-0007">Acetylation</keyword>
<keyword id="KW-0067">ATP-binding</keyword>
<keyword id="KW-0143">Chaperone</keyword>
<keyword id="KW-0963">Cytoplasm</keyword>
<keyword id="KW-0206">Cytoskeleton</keyword>
<keyword id="KW-0378">Hydrolase</keyword>
<keyword id="KW-0460">Magnesium</keyword>
<keyword id="KW-0479">Metal-binding</keyword>
<keyword id="KW-0547">Nucleotide-binding</keyword>
<keyword id="KW-0597">Phosphoprotein</keyword>
<comment type="function">
    <text evidence="2">Component of the chaperonin-containing T-complex (TRiC), a molecular chaperone complex that assists the folding of actin, tubulin and other proteins upon ATP hydrolysis. The TRiC complex mediates the folding of WRAP53/TCAB1, thereby regulating telomere maintenance. As part of the TRiC complex may play a role in the assembly of BBSome, a complex involved in ciliogenesis regulating transports vesicles to the cilia.</text>
</comment>
<comment type="catalytic activity">
    <reaction evidence="2">
        <text>ATP + H2O = ADP + phosphate + H(+)</text>
        <dbReference type="Rhea" id="RHEA:13065"/>
        <dbReference type="ChEBI" id="CHEBI:15377"/>
        <dbReference type="ChEBI" id="CHEBI:15378"/>
        <dbReference type="ChEBI" id="CHEBI:30616"/>
        <dbReference type="ChEBI" id="CHEBI:43474"/>
        <dbReference type="ChEBI" id="CHEBI:456216"/>
    </reaction>
</comment>
<comment type="subunit">
    <text evidence="2">Component of the chaperonin-containing T-complex (TRiC), a hexadecamer composed of two identical back-to-back stacked rings enclosing a protein folding chamber. Each ring is made up of eight different subunits: TCP1/CCT1, CCT2, CCT3, CCT4, CCT5, CCT6A/CCT6, CCT7, CCT8. Interacts with PACRG. Interacts with GBA1. Interacts with DLEC1.</text>
</comment>
<comment type="subcellular location">
    <subcellularLocation>
        <location evidence="2">Cytoplasm</location>
        <location evidence="2">Cytosol</location>
    </subcellularLocation>
    <subcellularLocation>
        <location evidence="2">Cytoplasm</location>
        <location evidence="2">Cytoskeleton</location>
        <location evidence="2">Microtubule organizing center</location>
        <location evidence="2">Centrosome</location>
    </subcellularLocation>
</comment>
<comment type="similarity">
    <text evidence="3">Belongs to the TCP-1 chaperonin family.</text>
</comment>
<feature type="chain" id="PRO_0000128301" description="T-complex protein 1 subunit alpha">
    <location>
        <begin position="1"/>
        <end position="556"/>
    </location>
</feature>
<feature type="binding site" evidence="2">
    <location>
        <position position="37"/>
    </location>
    <ligand>
        <name>ADP</name>
        <dbReference type="ChEBI" id="CHEBI:456216"/>
    </ligand>
</feature>
<feature type="binding site" evidence="2">
    <location>
        <position position="37"/>
    </location>
    <ligand>
        <name>ATP</name>
        <dbReference type="ChEBI" id="CHEBI:30616"/>
    </ligand>
</feature>
<feature type="binding site" evidence="2">
    <location>
        <position position="88"/>
    </location>
    <ligand>
        <name>Mg(2+)</name>
        <dbReference type="ChEBI" id="CHEBI:18420"/>
    </ligand>
</feature>
<feature type="binding site" evidence="2">
    <location>
        <position position="89"/>
    </location>
    <ligand>
        <name>ADP</name>
        <dbReference type="ChEBI" id="CHEBI:456216"/>
    </ligand>
</feature>
<feature type="binding site" evidence="2">
    <location>
        <position position="89"/>
    </location>
    <ligand>
        <name>ATP</name>
        <dbReference type="ChEBI" id="CHEBI:30616"/>
    </ligand>
</feature>
<feature type="binding site" evidence="2">
    <location>
        <position position="90"/>
    </location>
    <ligand>
        <name>ADP</name>
        <dbReference type="ChEBI" id="CHEBI:456216"/>
    </ligand>
</feature>
<feature type="binding site" evidence="2">
    <location>
        <position position="90"/>
    </location>
    <ligand>
        <name>ATP</name>
        <dbReference type="ChEBI" id="CHEBI:30616"/>
    </ligand>
</feature>
<feature type="binding site" evidence="2">
    <location>
        <position position="91"/>
    </location>
    <ligand>
        <name>ADP</name>
        <dbReference type="ChEBI" id="CHEBI:456216"/>
    </ligand>
</feature>
<feature type="binding site" evidence="2">
    <location>
        <position position="91"/>
    </location>
    <ligand>
        <name>ATP</name>
        <dbReference type="ChEBI" id="CHEBI:30616"/>
    </ligand>
</feature>
<feature type="binding site" evidence="2">
    <location>
        <position position="92"/>
    </location>
    <ligand>
        <name>ADP</name>
        <dbReference type="ChEBI" id="CHEBI:456216"/>
    </ligand>
</feature>
<feature type="binding site" evidence="2">
    <location>
        <position position="158"/>
    </location>
    <ligand>
        <name>ADP</name>
        <dbReference type="ChEBI" id="CHEBI:456216"/>
    </ligand>
</feature>
<feature type="binding site" evidence="2">
    <location>
        <position position="159"/>
    </location>
    <ligand>
        <name>ADP</name>
        <dbReference type="ChEBI" id="CHEBI:456216"/>
    </ligand>
</feature>
<feature type="binding site" evidence="2">
    <location>
        <position position="412"/>
    </location>
    <ligand>
        <name>ADP</name>
        <dbReference type="ChEBI" id="CHEBI:456216"/>
    </ligand>
</feature>
<feature type="binding site" evidence="2">
    <location>
        <position position="505"/>
    </location>
    <ligand>
        <name>ADP</name>
        <dbReference type="ChEBI" id="CHEBI:456216"/>
    </ligand>
</feature>
<feature type="modified residue" description="N-acetylmethionine" evidence="2">
    <location>
        <position position="1"/>
    </location>
</feature>
<feature type="modified residue" description="Phosphoserine" evidence="2">
    <location>
        <position position="6"/>
    </location>
</feature>
<feature type="modified residue" description="Phosphotyrosine" evidence="2">
    <location>
        <position position="181"/>
    </location>
</feature>
<feature type="modified residue" description="N6-acetyllysine" evidence="2">
    <location>
        <position position="199"/>
    </location>
</feature>
<feature type="modified residue" description="N6-acetyllysine" evidence="2">
    <location>
        <position position="400"/>
    </location>
</feature>
<feature type="modified residue" description="N6-acetyllysine" evidence="1">
    <location>
        <position position="494"/>
    </location>
</feature>
<feature type="modified residue" description="Phosphoserine" evidence="2">
    <location>
        <position position="544"/>
    </location>
</feature>
<feature type="modified residue" description="Phosphoserine" evidence="2">
    <location>
        <position position="551"/>
    </location>
</feature>
<proteinExistence type="evidence at transcript level"/>
<reference key="1">
    <citation type="journal article" date="1990" name="Biochim. Biophys. Acta">
        <title>Cloning of a Chinese hamster protein homologous to the mouse t-complex protein TCP-1: structural similarity to the ubiquitous 'chaperonin' family of heat-shock proteins.</title>
        <authorList>
            <person name="Ahmad S."/>
            <person name="Gupta R.S."/>
        </authorList>
    </citation>
    <scope>NUCLEOTIDE SEQUENCE [MRNA]</scope>
</reference>